<comment type="similarity">
    <text evidence="1">Belongs to the UPF0352 family.</text>
</comment>
<comment type="sequence caution" evidence="2">
    <conflict type="erroneous initiation">
        <sequence resource="EMBL-CDS" id="AAU38517"/>
    </conflict>
</comment>
<organism>
    <name type="scientific">Mannheimia succiniciproducens (strain KCTC 0769BP / MBEL55E)</name>
    <dbReference type="NCBI Taxonomy" id="221988"/>
    <lineage>
        <taxon>Bacteria</taxon>
        <taxon>Pseudomonadati</taxon>
        <taxon>Pseudomonadota</taxon>
        <taxon>Gammaproteobacteria</taxon>
        <taxon>Pasteurellales</taxon>
        <taxon>Pasteurellaceae</taxon>
        <taxon>Basfia</taxon>
    </lineage>
</organism>
<reference key="1">
    <citation type="journal article" date="2004" name="Nat. Biotechnol.">
        <title>The genome sequence of the capnophilic rumen bacterium Mannheimia succiniciproducens.</title>
        <authorList>
            <person name="Hong S.H."/>
            <person name="Kim J.S."/>
            <person name="Lee S.Y."/>
            <person name="In Y.H."/>
            <person name="Choi S.S."/>
            <person name="Rih J.-K."/>
            <person name="Kim C.H."/>
            <person name="Jeong H."/>
            <person name="Hur C.G."/>
            <person name="Kim J.J."/>
        </authorList>
    </citation>
    <scope>NUCLEOTIDE SEQUENCE [LARGE SCALE GENOMIC DNA]</scope>
    <source>
        <strain>KCTC 0769BP / MBEL55E</strain>
    </source>
</reference>
<evidence type="ECO:0000255" key="1">
    <source>
        <dbReference type="HAMAP-Rule" id="MF_00816"/>
    </source>
</evidence>
<evidence type="ECO:0000305" key="2"/>
<name>Y1910_MANSM</name>
<feature type="chain" id="PRO_0000201791" description="UPF0352 protein MS1910">
    <location>
        <begin position="1"/>
        <end position="74"/>
    </location>
</feature>
<accession>Q65R93</accession>
<sequence>MAINSKYQDKQVDEILKDIIEVLEKHKAPVDLSLVVLGNMVTNLLTSSVGANQRTVLAQAFSDALLNSVKTKHH</sequence>
<protein>
    <recommendedName>
        <fullName evidence="1">UPF0352 protein MS1910</fullName>
    </recommendedName>
</protein>
<gene>
    <name type="ordered locus">MS1910</name>
</gene>
<dbReference type="EMBL" id="AE016827">
    <property type="protein sequence ID" value="AAU38517.1"/>
    <property type="status" value="ALT_INIT"/>
    <property type="molecule type" value="Genomic_DNA"/>
</dbReference>
<dbReference type="RefSeq" id="WP_041640004.1">
    <property type="nucleotide sequence ID" value="NC_006300.1"/>
</dbReference>
<dbReference type="SMR" id="Q65R93"/>
<dbReference type="STRING" id="221988.MS1910"/>
<dbReference type="KEGG" id="msu:MS1910"/>
<dbReference type="eggNOG" id="COG3082">
    <property type="taxonomic scope" value="Bacteria"/>
</dbReference>
<dbReference type="HOGENOM" id="CLU_175457_0_0_6"/>
<dbReference type="OrthoDB" id="5771474at2"/>
<dbReference type="Proteomes" id="UP000000607">
    <property type="component" value="Chromosome"/>
</dbReference>
<dbReference type="Gene3D" id="1.10.3390.10">
    <property type="entry name" value="YejL-like"/>
    <property type="match status" value="1"/>
</dbReference>
<dbReference type="HAMAP" id="MF_00816">
    <property type="entry name" value="UPF0352"/>
    <property type="match status" value="1"/>
</dbReference>
<dbReference type="InterPro" id="IPR009857">
    <property type="entry name" value="UPF0352"/>
</dbReference>
<dbReference type="InterPro" id="IPR023202">
    <property type="entry name" value="YejL_sf"/>
</dbReference>
<dbReference type="NCBIfam" id="NF010242">
    <property type="entry name" value="PRK13689.1"/>
    <property type="match status" value="1"/>
</dbReference>
<dbReference type="Pfam" id="PF07208">
    <property type="entry name" value="DUF1414"/>
    <property type="match status" value="1"/>
</dbReference>
<dbReference type="PIRSF" id="PIRSF006188">
    <property type="entry name" value="UCP006188"/>
    <property type="match status" value="1"/>
</dbReference>
<dbReference type="SUPFAM" id="SSF158651">
    <property type="entry name" value="YejL-like"/>
    <property type="match status" value="1"/>
</dbReference>
<proteinExistence type="inferred from homology"/>